<dbReference type="EMBL" id="AAFI02000106">
    <property type="protein sequence ID" value="EAL63459.1"/>
    <property type="molecule type" value="Genomic_DNA"/>
</dbReference>
<dbReference type="RefSeq" id="XP_636964.1">
    <property type="nucleotide sequence ID" value="XM_631872.1"/>
</dbReference>
<dbReference type="FunCoup" id="Q54JM2">
    <property type="interactions" value="1"/>
</dbReference>
<dbReference type="PaxDb" id="44689-DDB0233252"/>
<dbReference type="EnsemblProtists" id="EAL63459">
    <property type="protein sequence ID" value="EAL63459"/>
    <property type="gene ID" value="DDB_G0287957"/>
</dbReference>
<dbReference type="GeneID" id="8626384"/>
<dbReference type="KEGG" id="ddi:DDB_G0287957"/>
<dbReference type="dictyBase" id="DDB_G0287957"/>
<dbReference type="VEuPathDB" id="AmoebaDB:DDB_G0287957"/>
<dbReference type="HOGENOM" id="CLU_504769_0_0_1"/>
<dbReference type="InParanoid" id="Q54JM2"/>
<dbReference type="PhylomeDB" id="Q54JM2"/>
<dbReference type="PRO" id="PR:Q54JM2"/>
<dbReference type="Proteomes" id="UP000002195">
    <property type="component" value="Chromosome 5"/>
</dbReference>
<dbReference type="GO" id="GO:0016301">
    <property type="term" value="F:kinase activity"/>
    <property type="evidence" value="ECO:0007669"/>
    <property type="project" value="UniProtKB-KW"/>
</dbReference>
<dbReference type="Gene3D" id="1.10.1070.11">
    <property type="entry name" value="Phosphatidylinositol 3-/4-kinase, catalytic domain"/>
    <property type="match status" value="1"/>
</dbReference>
<dbReference type="Gene3D" id="3.30.1010.10">
    <property type="entry name" value="Phosphatidylinositol 3-kinase Catalytic Subunit, Chain A, domain 4"/>
    <property type="match status" value="1"/>
</dbReference>
<dbReference type="InterPro" id="IPR015275">
    <property type="entry name" value="Actin-fragmin_kin_cat_dom"/>
</dbReference>
<dbReference type="InterPro" id="IPR011009">
    <property type="entry name" value="Kinase-like_dom_sf"/>
</dbReference>
<dbReference type="InterPro" id="IPR036940">
    <property type="entry name" value="PI3/4_kinase_cat_sf"/>
</dbReference>
<dbReference type="InterPro" id="IPR037469">
    <property type="entry name" value="Put_AFK"/>
</dbReference>
<dbReference type="PANTHER" id="PTHR38737:SF2">
    <property type="entry name" value="ACTIN-FRAGMIN KINASE DDB_G0268748-RELATED"/>
    <property type="match status" value="1"/>
</dbReference>
<dbReference type="PANTHER" id="PTHR38737">
    <property type="entry name" value="ACTIN-FRAGMIN KINASE DDB_G0279609-RELATED"/>
    <property type="match status" value="1"/>
</dbReference>
<dbReference type="Pfam" id="PF09192">
    <property type="entry name" value="Act-Frag_cataly"/>
    <property type="match status" value="2"/>
</dbReference>
<dbReference type="SUPFAM" id="SSF56112">
    <property type="entry name" value="Protein kinase-like (PK-like)"/>
    <property type="match status" value="2"/>
</dbReference>
<organism>
    <name type="scientific">Dictyostelium discoideum</name>
    <name type="common">Social amoeba</name>
    <dbReference type="NCBI Taxonomy" id="44689"/>
    <lineage>
        <taxon>Eukaryota</taxon>
        <taxon>Amoebozoa</taxon>
        <taxon>Evosea</taxon>
        <taxon>Eumycetozoa</taxon>
        <taxon>Dictyostelia</taxon>
        <taxon>Dictyosteliales</taxon>
        <taxon>Dictyosteliaceae</taxon>
        <taxon>Dictyostelium</taxon>
    </lineage>
</organism>
<accession>Q54JM2</accession>
<keyword id="KW-0175">Coiled coil</keyword>
<keyword id="KW-0418">Kinase</keyword>
<keyword id="KW-1185">Reference proteome</keyword>
<keyword id="KW-0808">Transferase</keyword>
<comment type="similarity">
    <text evidence="3">Belongs to the protein kinase superfamily. AFK Ser/Thr protein kinase family.</text>
</comment>
<protein>
    <recommendedName>
        <fullName>Putative actin-fragmin kinase DDB_G0287957</fullName>
    </recommendedName>
</protein>
<evidence type="ECO:0000255" key="1"/>
<evidence type="ECO:0000256" key="2">
    <source>
        <dbReference type="SAM" id="MobiDB-lite"/>
    </source>
</evidence>
<evidence type="ECO:0000305" key="3"/>
<name>Y7957_DICDI</name>
<feature type="chain" id="PRO_0000367582" description="Putative actin-fragmin kinase DDB_G0287957">
    <location>
        <begin position="1"/>
        <end position="540"/>
    </location>
</feature>
<feature type="region of interest" description="Disordered" evidence="2">
    <location>
        <begin position="37"/>
        <end position="70"/>
    </location>
</feature>
<feature type="region of interest" description="Disordered" evidence="2">
    <location>
        <begin position="317"/>
        <end position="341"/>
    </location>
</feature>
<feature type="coiled-coil region" evidence="1">
    <location>
        <begin position="27"/>
        <end position="68"/>
    </location>
</feature>
<proteinExistence type="inferred from homology"/>
<sequence length="540" mass="62283">MTFIIKKVKNIFSTKKINNKTNNNNFKNENLNIKNEILNNNNNNNNNKNNNNNNNNNNNIENNSKNENFNNFNKIHNSPISSPNLSPSLNSIDSINLNKIIIQNIDNFETNGNILNTSSPSLNSSVAKNNFIISDIQDIDWNNLVNIELLNNNINNNNNTNNNNNNNIIILVTFYNGYDDFNQVILKSSNTMVQDVYASVLQVILKYPVPEMRLIDSCEEEFNKMSINLLKQSKLQSEQLFNIIQTQIEKPFFLIMEYKNGGKFFSQLNHKEYFSSQKNGEKKLKQLGKLLSFDLICNINNNICNFNYNNCNNNNNNNNNNNNNNNNNNNNNNNNNNINNCNNNNNNNISLNNSNNNLNSIFNNNNFNIFSNIIFYEQPDKNGWYFGIIHSSILCLNSSSFTPGYRNTMDRIKLLLFSIFQNPTTESLQIYHFRKYLSNNCNINLPSSSVHWSTNIQNGIAKGIDELVNSLNYQVFASTKQIVNNMIFSTTDQNNNNVIINNNNSFTWKKGIDLIYIPFLFDVLKEIIIEHSNYKNKSKK</sequence>
<gene>
    <name type="ORF">DDB_G0287957</name>
</gene>
<reference key="1">
    <citation type="journal article" date="2005" name="Nature">
        <title>The genome of the social amoeba Dictyostelium discoideum.</title>
        <authorList>
            <person name="Eichinger L."/>
            <person name="Pachebat J.A."/>
            <person name="Gloeckner G."/>
            <person name="Rajandream M.A."/>
            <person name="Sucgang R."/>
            <person name="Berriman M."/>
            <person name="Song J."/>
            <person name="Olsen R."/>
            <person name="Szafranski K."/>
            <person name="Xu Q."/>
            <person name="Tunggal B."/>
            <person name="Kummerfeld S."/>
            <person name="Madera M."/>
            <person name="Konfortov B.A."/>
            <person name="Rivero F."/>
            <person name="Bankier A.T."/>
            <person name="Lehmann R."/>
            <person name="Hamlin N."/>
            <person name="Davies R."/>
            <person name="Gaudet P."/>
            <person name="Fey P."/>
            <person name="Pilcher K."/>
            <person name="Chen G."/>
            <person name="Saunders D."/>
            <person name="Sodergren E.J."/>
            <person name="Davis P."/>
            <person name="Kerhornou A."/>
            <person name="Nie X."/>
            <person name="Hall N."/>
            <person name="Anjard C."/>
            <person name="Hemphill L."/>
            <person name="Bason N."/>
            <person name="Farbrother P."/>
            <person name="Desany B."/>
            <person name="Just E."/>
            <person name="Morio T."/>
            <person name="Rost R."/>
            <person name="Churcher C.M."/>
            <person name="Cooper J."/>
            <person name="Haydock S."/>
            <person name="van Driessche N."/>
            <person name="Cronin A."/>
            <person name="Goodhead I."/>
            <person name="Muzny D.M."/>
            <person name="Mourier T."/>
            <person name="Pain A."/>
            <person name="Lu M."/>
            <person name="Harper D."/>
            <person name="Lindsay R."/>
            <person name="Hauser H."/>
            <person name="James K.D."/>
            <person name="Quiles M."/>
            <person name="Madan Babu M."/>
            <person name="Saito T."/>
            <person name="Buchrieser C."/>
            <person name="Wardroper A."/>
            <person name="Felder M."/>
            <person name="Thangavelu M."/>
            <person name="Johnson D."/>
            <person name="Knights A."/>
            <person name="Loulseged H."/>
            <person name="Mungall K.L."/>
            <person name="Oliver K."/>
            <person name="Price C."/>
            <person name="Quail M.A."/>
            <person name="Urushihara H."/>
            <person name="Hernandez J."/>
            <person name="Rabbinowitsch E."/>
            <person name="Steffen D."/>
            <person name="Sanders M."/>
            <person name="Ma J."/>
            <person name="Kohara Y."/>
            <person name="Sharp S."/>
            <person name="Simmonds M.N."/>
            <person name="Spiegler S."/>
            <person name="Tivey A."/>
            <person name="Sugano S."/>
            <person name="White B."/>
            <person name="Walker D."/>
            <person name="Woodward J.R."/>
            <person name="Winckler T."/>
            <person name="Tanaka Y."/>
            <person name="Shaulsky G."/>
            <person name="Schleicher M."/>
            <person name="Weinstock G.M."/>
            <person name="Rosenthal A."/>
            <person name="Cox E.C."/>
            <person name="Chisholm R.L."/>
            <person name="Gibbs R.A."/>
            <person name="Loomis W.F."/>
            <person name="Platzer M."/>
            <person name="Kay R.R."/>
            <person name="Williams J.G."/>
            <person name="Dear P.H."/>
            <person name="Noegel A.A."/>
            <person name="Barrell B.G."/>
            <person name="Kuspa A."/>
        </authorList>
    </citation>
    <scope>NUCLEOTIDE SEQUENCE [LARGE SCALE GENOMIC DNA]</scope>
    <source>
        <strain>AX4</strain>
    </source>
</reference>
<reference key="2">
    <citation type="journal article" date="2006" name="PLoS Genet.">
        <title>The dictyostelium kinome -- analysis of the protein kinases from a simple model organism.</title>
        <authorList>
            <person name="Goldberg J.M."/>
            <person name="Manning G."/>
            <person name="Liu A."/>
            <person name="Fey P."/>
            <person name="Pilcher K.E."/>
            <person name="Xu Y."/>
            <person name="Smith J.L."/>
        </authorList>
    </citation>
    <scope>GENE FAMILY</scope>
    <scope>NOMENCLATURE</scope>
</reference>